<feature type="chain" id="PRO_1000070814" description="Cytochrome c-type biogenesis protein CcmE">
    <location>
        <begin position="1"/>
        <end position="159"/>
    </location>
</feature>
<feature type="topological domain" description="Cytoplasmic" evidence="1">
    <location>
        <begin position="1"/>
        <end position="8"/>
    </location>
</feature>
<feature type="transmembrane region" description="Helical; Signal-anchor for type II membrane protein" evidence="1">
    <location>
        <begin position="9"/>
        <end position="29"/>
    </location>
</feature>
<feature type="topological domain" description="Periplasmic" evidence="1">
    <location>
        <begin position="30"/>
        <end position="159"/>
    </location>
</feature>
<feature type="region of interest" description="Disordered" evidence="2">
    <location>
        <begin position="130"/>
        <end position="159"/>
    </location>
</feature>
<feature type="binding site" description="covalent" evidence="1">
    <location>
        <position position="130"/>
    </location>
    <ligand>
        <name>heme</name>
        <dbReference type="ChEBI" id="CHEBI:30413"/>
    </ligand>
</feature>
<feature type="binding site" description="axial binding residue" evidence="1">
    <location>
        <position position="134"/>
    </location>
    <ligand>
        <name>heme</name>
        <dbReference type="ChEBI" id="CHEBI:30413"/>
    </ligand>
    <ligandPart>
        <name>Fe</name>
        <dbReference type="ChEBI" id="CHEBI:18248"/>
    </ligandPart>
</feature>
<keyword id="KW-0997">Cell inner membrane</keyword>
<keyword id="KW-1003">Cell membrane</keyword>
<keyword id="KW-0201">Cytochrome c-type biogenesis</keyword>
<keyword id="KW-0349">Heme</keyword>
<keyword id="KW-0408">Iron</keyword>
<keyword id="KW-0472">Membrane</keyword>
<keyword id="KW-0479">Metal-binding</keyword>
<keyword id="KW-1185">Reference proteome</keyword>
<keyword id="KW-0735">Signal-anchor</keyword>
<keyword id="KW-0812">Transmembrane</keyword>
<keyword id="KW-1133">Transmembrane helix</keyword>
<accession>A7MH88</accession>
<sequence length="159" mass="17656">MNPRRKTRLWVALTVLAGLGLTMALVLYALRANIDLFYTPGEILYGKGAAQEKPEPGQRLRVGGMVMPGSVKRDSRSLKVSFRLYDARGVVDVDYDGILPDLFREGQGVVAQGVLGDDQRIHAREVLAKHDENYTPPEVKAAMDANHTRPPQAYKDNRP</sequence>
<protein>
    <recommendedName>
        <fullName evidence="1">Cytochrome c-type biogenesis protein CcmE</fullName>
    </recommendedName>
    <alternativeName>
        <fullName evidence="1">Cytochrome c maturation protein E</fullName>
    </alternativeName>
    <alternativeName>
        <fullName evidence="1">Heme chaperone CcmE</fullName>
    </alternativeName>
</protein>
<dbReference type="EMBL" id="CP000783">
    <property type="protein sequence ID" value="ABU76143.1"/>
    <property type="molecule type" value="Genomic_DNA"/>
</dbReference>
<dbReference type="RefSeq" id="WP_012124126.1">
    <property type="nucleotide sequence ID" value="NC_009778.1"/>
</dbReference>
<dbReference type="SMR" id="A7MH88"/>
<dbReference type="KEGG" id="esa:ESA_00873"/>
<dbReference type="PATRIC" id="fig|290339.8.peg.773"/>
<dbReference type="HOGENOM" id="CLU_079503_1_0_6"/>
<dbReference type="Proteomes" id="UP000000260">
    <property type="component" value="Chromosome"/>
</dbReference>
<dbReference type="GO" id="GO:0005886">
    <property type="term" value="C:plasma membrane"/>
    <property type="evidence" value="ECO:0007669"/>
    <property type="project" value="UniProtKB-SubCell"/>
</dbReference>
<dbReference type="GO" id="GO:0020037">
    <property type="term" value="F:heme binding"/>
    <property type="evidence" value="ECO:0007669"/>
    <property type="project" value="InterPro"/>
</dbReference>
<dbReference type="GO" id="GO:0046872">
    <property type="term" value="F:metal ion binding"/>
    <property type="evidence" value="ECO:0007669"/>
    <property type="project" value="UniProtKB-KW"/>
</dbReference>
<dbReference type="GO" id="GO:0017004">
    <property type="term" value="P:cytochrome complex assembly"/>
    <property type="evidence" value="ECO:0007669"/>
    <property type="project" value="UniProtKB-KW"/>
</dbReference>
<dbReference type="FunFam" id="2.40.50.140:FF:000104">
    <property type="entry name" value="Cytochrome c-type biogenesis protein CcmE"/>
    <property type="match status" value="1"/>
</dbReference>
<dbReference type="Gene3D" id="2.40.50.140">
    <property type="entry name" value="Nucleic acid-binding proteins"/>
    <property type="match status" value="1"/>
</dbReference>
<dbReference type="HAMAP" id="MF_01959">
    <property type="entry name" value="CcmE"/>
    <property type="match status" value="1"/>
</dbReference>
<dbReference type="InterPro" id="IPR004329">
    <property type="entry name" value="CcmE"/>
</dbReference>
<dbReference type="InterPro" id="IPR036127">
    <property type="entry name" value="CcmE-like_sf"/>
</dbReference>
<dbReference type="InterPro" id="IPR012340">
    <property type="entry name" value="NA-bd_OB-fold"/>
</dbReference>
<dbReference type="NCBIfam" id="NF009635">
    <property type="entry name" value="PRK13150.1"/>
    <property type="match status" value="1"/>
</dbReference>
<dbReference type="NCBIfam" id="NF009638">
    <property type="entry name" value="PRK13165.1"/>
    <property type="match status" value="1"/>
</dbReference>
<dbReference type="NCBIfam" id="NF009727">
    <property type="entry name" value="PRK13254.1-1"/>
    <property type="match status" value="1"/>
</dbReference>
<dbReference type="NCBIfam" id="NF009729">
    <property type="entry name" value="PRK13254.1-3"/>
    <property type="match status" value="1"/>
</dbReference>
<dbReference type="PANTHER" id="PTHR34128">
    <property type="entry name" value="CYTOCHROME C-TYPE BIOGENESIS PROTEIN CCME HOMOLOG, MITOCHONDRIAL"/>
    <property type="match status" value="1"/>
</dbReference>
<dbReference type="PANTHER" id="PTHR34128:SF2">
    <property type="entry name" value="CYTOCHROME C-TYPE BIOGENESIS PROTEIN CCME HOMOLOG, MITOCHONDRIAL"/>
    <property type="match status" value="1"/>
</dbReference>
<dbReference type="Pfam" id="PF03100">
    <property type="entry name" value="CcmE"/>
    <property type="match status" value="1"/>
</dbReference>
<dbReference type="SUPFAM" id="SSF82093">
    <property type="entry name" value="Heme chaperone CcmE"/>
    <property type="match status" value="1"/>
</dbReference>
<comment type="function">
    <text evidence="1">Heme chaperone required for the biogenesis of c-type cytochromes. Transiently binds heme delivered by CcmC and transfers the heme to apo-cytochromes in a process facilitated by CcmF and CcmH.</text>
</comment>
<comment type="subcellular location">
    <subcellularLocation>
        <location evidence="1">Cell inner membrane</location>
        <topology evidence="1">Single-pass type II membrane protein</topology>
        <orientation evidence="1">Periplasmic side</orientation>
    </subcellularLocation>
</comment>
<comment type="similarity">
    <text evidence="1">Belongs to the CcmE/CycJ family.</text>
</comment>
<organism>
    <name type="scientific">Cronobacter sakazakii (strain ATCC BAA-894)</name>
    <name type="common">Enterobacter sakazakii</name>
    <dbReference type="NCBI Taxonomy" id="290339"/>
    <lineage>
        <taxon>Bacteria</taxon>
        <taxon>Pseudomonadati</taxon>
        <taxon>Pseudomonadota</taxon>
        <taxon>Gammaproteobacteria</taxon>
        <taxon>Enterobacterales</taxon>
        <taxon>Enterobacteriaceae</taxon>
        <taxon>Cronobacter</taxon>
    </lineage>
</organism>
<proteinExistence type="inferred from homology"/>
<evidence type="ECO:0000255" key="1">
    <source>
        <dbReference type="HAMAP-Rule" id="MF_01959"/>
    </source>
</evidence>
<evidence type="ECO:0000256" key="2">
    <source>
        <dbReference type="SAM" id="MobiDB-lite"/>
    </source>
</evidence>
<name>CCME_CROS8</name>
<reference key="1">
    <citation type="journal article" date="2010" name="PLoS ONE">
        <title>Genome sequence of Cronobacter sakazakii BAA-894 and comparative genomic hybridization analysis with other Cronobacter species.</title>
        <authorList>
            <person name="Kucerova E."/>
            <person name="Clifton S.W."/>
            <person name="Xia X.Q."/>
            <person name="Long F."/>
            <person name="Porwollik S."/>
            <person name="Fulton L."/>
            <person name="Fronick C."/>
            <person name="Minx P."/>
            <person name="Kyung K."/>
            <person name="Warren W."/>
            <person name="Fulton R."/>
            <person name="Feng D."/>
            <person name="Wollam A."/>
            <person name="Shah N."/>
            <person name="Bhonagiri V."/>
            <person name="Nash W.E."/>
            <person name="Hallsworth-Pepin K."/>
            <person name="Wilson R.K."/>
            <person name="McClelland M."/>
            <person name="Forsythe S.J."/>
        </authorList>
    </citation>
    <scope>NUCLEOTIDE SEQUENCE [LARGE SCALE GENOMIC DNA]</scope>
    <source>
        <strain>ATCC BAA-894</strain>
    </source>
</reference>
<gene>
    <name evidence="1" type="primary">ccmE</name>
    <name evidence="1" type="synonym">cycJ</name>
    <name type="ordered locus">ESA_00873</name>
</gene>